<dbReference type="EC" id="1.1.1.86" evidence="1"/>
<dbReference type="EMBL" id="AJ965256">
    <property type="protein sequence ID" value="CAI82958.1"/>
    <property type="molecule type" value="Genomic_DNA"/>
</dbReference>
<dbReference type="RefSeq" id="WP_011309309.1">
    <property type="nucleotide sequence ID" value="NC_007356.1"/>
</dbReference>
<dbReference type="SMR" id="Q3ZXI2"/>
<dbReference type="KEGG" id="deh:cbdbA811"/>
<dbReference type="HOGENOM" id="CLU_033821_0_1_0"/>
<dbReference type="UniPathway" id="UPA00047">
    <property type="reaction ID" value="UER00056"/>
</dbReference>
<dbReference type="UniPathway" id="UPA00049">
    <property type="reaction ID" value="UER00060"/>
</dbReference>
<dbReference type="Proteomes" id="UP000000433">
    <property type="component" value="Chromosome"/>
</dbReference>
<dbReference type="GO" id="GO:0005829">
    <property type="term" value="C:cytosol"/>
    <property type="evidence" value="ECO:0007669"/>
    <property type="project" value="TreeGrafter"/>
</dbReference>
<dbReference type="GO" id="GO:0004455">
    <property type="term" value="F:ketol-acid reductoisomerase activity"/>
    <property type="evidence" value="ECO:0007669"/>
    <property type="project" value="UniProtKB-UniRule"/>
</dbReference>
<dbReference type="GO" id="GO:0000287">
    <property type="term" value="F:magnesium ion binding"/>
    <property type="evidence" value="ECO:0007669"/>
    <property type="project" value="UniProtKB-UniRule"/>
</dbReference>
<dbReference type="GO" id="GO:0050661">
    <property type="term" value="F:NADP binding"/>
    <property type="evidence" value="ECO:0007669"/>
    <property type="project" value="InterPro"/>
</dbReference>
<dbReference type="GO" id="GO:0009097">
    <property type="term" value="P:isoleucine biosynthetic process"/>
    <property type="evidence" value="ECO:0007669"/>
    <property type="project" value="UniProtKB-UniRule"/>
</dbReference>
<dbReference type="GO" id="GO:0009099">
    <property type="term" value="P:L-valine biosynthetic process"/>
    <property type="evidence" value="ECO:0007669"/>
    <property type="project" value="UniProtKB-UniRule"/>
</dbReference>
<dbReference type="FunFam" id="3.40.50.720:FF:000023">
    <property type="entry name" value="Ketol-acid reductoisomerase (NADP(+))"/>
    <property type="match status" value="1"/>
</dbReference>
<dbReference type="Gene3D" id="6.10.240.10">
    <property type="match status" value="1"/>
</dbReference>
<dbReference type="Gene3D" id="3.40.50.720">
    <property type="entry name" value="NAD(P)-binding Rossmann-like Domain"/>
    <property type="match status" value="1"/>
</dbReference>
<dbReference type="HAMAP" id="MF_00435">
    <property type="entry name" value="IlvC"/>
    <property type="match status" value="1"/>
</dbReference>
<dbReference type="InterPro" id="IPR008927">
    <property type="entry name" value="6-PGluconate_DH-like_C_sf"/>
</dbReference>
<dbReference type="InterPro" id="IPR013023">
    <property type="entry name" value="KARI"/>
</dbReference>
<dbReference type="InterPro" id="IPR000506">
    <property type="entry name" value="KARI_C"/>
</dbReference>
<dbReference type="InterPro" id="IPR013116">
    <property type="entry name" value="KARI_N"/>
</dbReference>
<dbReference type="InterPro" id="IPR014359">
    <property type="entry name" value="KARI_prok"/>
</dbReference>
<dbReference type="InterPro" id="IPR036291">
    <property type="entry name" value="NAD(P)-bd_dom_sf"/>
</dbReference>
<dbReference type="NCBIfam" id="TIGR00465">
    <property type="entry name" value="ilvC"/>
    <property type="match status" value="1"/>
</dbReference>
<dbReference type="NCBIfam" id="NF004017">
    <property type="entry name" value="PRK05479.1"/>
    <property type="match status" value="1"/>
</dbReference>
<dbReference type="NCBIfam" id="NF009940">
    <property type="entry name" value="PRK13403.1"/>
    <property type="match status" value="1"/>
</dbReference>
<dbReference type="PANTHER" id="PTHR21371">
    <property type="entry name" value="KETOL-ACID REDUCTOISOMERASE, MITOCHONDRIAL"/>
    <property type="match status" value="1"/>
</dbReference>
<dbReference type="PANTHER" id="PTHR21371:SF1">
    <property type="entry name" value="KETOL-ACID REDUCTOISOMERASE, MITOCHONDRIAL"/>
    <property type="match status" value="1"/>
</dbReference>
<dbReference type="Pfam" id="PF01450">
    <property type="entry name" value="KARI_C"/>
    <property type="match status" value="1"/>
</dbReference>
<dbReference type="Pfam" id="PF07991">
    <property type="entry name" value="KARI_N"/>
    <property type="match status" value="1"/>
</dbReference>
<dbReference type="PIRSF" id="PIRSF000116">
    <property type="entry name" value="IlvC_gammaproteo"/>
    <property type="match status" value="1"/>
</dbReference>
<dbReference type="SUPFAM" id="SSF48179">
    <property type="entry name" value="6-phosphogluconate dehydrogenase C-terminal domain-like"/>
    <property type="match status" value="1"/>
</dbReference>
<dbReference type="SUPFAM" id="SSF51735">
    <property type="entry name" value="NAD(P)-binding Rossmann-fold domains"/>
    <property type="match status" value="1"/>
</dbReference>
<dbReference type="PROSITE" id="PS51851">
    <property type="entry name" value="KARI_C"/>
    <property type="match status" value="1"/>
</dbReference>
<dbReference type="PROSITE" id="PS51850">
    <property type="entry name" value="KARI_N"/>
    <property type="match status" value="1"/>
</dbReference>
<comment type="function">
    <text evidence="1">Involved in the biosynthesis of branched-chain amino acids (BCAA). Catalyzes an alkyl-migration followed by a ketol-acid reduction of (S)-2-acetolactate (S2AL) to yield (R)-2,3-dihydroxy-isovalerate. In the isomerase reaction, S2AL is rearranged via a Mg-dependent methyl migration to produce 3-hydroxy-3-methyl-2-ketobutyrate (HMKB). In the reductase reaction, this 2-ketoacid undergoes a metal-dependent reduction by NADPH to yield (R)-2,3-dihydroxy-isovalerate.</text>
</comment>
<comment type="catalytic activity">
    <reaction evidence="1">
        <text>(2R)-2,3-dihydroxy-3-methylbutanoate + NADP(+) = (2S)-2-acetolactate + NADPH + H(+)</text>
        <dbReference type="Rhea" id="RHEA:22068"/>
        <dbReference type="ChEBI" id="CHEBI:15378"/>
        <dbReference type="ChEBI" id="CHEBI:49072"/>
        <dbReference type="ChEBI" id="CHEBI:57783"/>
        <dbReference type="ChEBI" id="CHEBI:58349"/>
        <dbReference type="ChEBI" id="CHEBI:58476"/>
        <dbReference type="EC" id="1.1.1.86"/>
    </reaction>
</comment>
<comment type="catalytic activity">
    <reaction evidence="1">
        <text>(2R,3R)-2,3-dihydroxy-3-methylpentanoate + NADP(+) = (S)-2-ethyl-2-hydroxy-3-oxobutanoate + NADPH + H(+)</text>
        <dbReference type="Rhea" id="RHEA:13493"/>
        <dbReference type="ChEBI" id="CHEBI:15378"/>
        <dbReference type="ChEBI" id="CHEBI:49256"/>
        <dbReference type="ChEBI" id="CHEBI:49258"/>
        <dbReference type="ChEBI" id="CHEBI:57783"/>
        <dbReference type="ChEBI" id="CHEBI:58349"/>
        <dbReference type="EC" id="1.1.1.86"/>
    </reaction>
</comment>
<comment type="cofactor">
    <cofactor evidence="1">
        <name>Mg(2+)</name>
        <dbReference type="ChEBI" id="CHEBI:18420"/>
    </cofactor>
    <text evidence="1">Binds 2 magnesium ions per subunit.</text>
</comment>
<comment type="pathway">
    <text evidence="1">Amino-acid biosynthesis; L-isoleucine biosynthesis; L-isoleucine from 2-oxobutanoate: step 2/4.</text>
</comment>
<comment type="pathway">
    <text evidence="1">Amino-acid biosynthesis; L-valine biosynthesis; L-valine from pyruvate: step 2/4.</text>
</comment>
<comment type="similarity">
    <text evidence="1">Belongs to the ketol-acid reductoisomerase family.</text>
</comment>
<protein>
    <recommendedName>
        <fullName evidence="1">Ketol-acid reductoisomerase (NADP(+))</fullName>
        <shortName evidence="1">KARI</shortName>
        <ecNumber evidence="1">1.1.1.86</ecNumber>
    </recommendedName>
    <alternativeName>
        <fullName evidence="1">Acetohydroxy-acid isomeroreductase</fullName>
        <shortName evidence="1">AHIR</shortName>
    </alternativeName>
    <alternativeName>
        <fullName evidence="1">Alpha-keto-beta-hydroxylacyl reductoisomerase</fullName>
    </alternativeName>
    <alternativeName>
        <fullName evidence="1">Ketol-acid reductoisomerase type 1</fullName>
    </alternativeName>
    <alternativeName>
        <fullName evidence="1">Ketol-acid reductoisomerase type I</fullName>
    </alternativeName>
</protein>
<gene>
    <name evidence="1" type="primary">ilvC</name>
    <name type="ordered locus">cbdbA811</name>
</gene>
<accession>Q3ZXI2</accession>
<proteinExistence type="inferred from homology"/>
<name>ILVC_DEHMC</name>
<keyword id="KW-0028">Amino-acid biosynthesis</keyword>
<keyword id="KW-0100">Branched-chain amino acid biosynthesis</keyword>
<keyword id="KW-0460">Magnesium</keyword>
<keyword id="KW-0479">Metal-binding</keyword>
<keyword id="KW-0521">NADP</keyword>
<keyword id="KW-0560">Oxidoreductase</keyword>
<evidence type="ECO:0000255" key="1">
    <source>
        <dbReference type="HAMAP-Rule" id="MF_00435"/>
    </source>
</evidence>
<evidence type="ECO:0000255" key="2">
    <source>
        <dbReference type="PROSITE-ProRule" id="PRU01197"/>
    </source>
</evidence>
<evidence type="ECO:0000255" key="3">
    <source>
        <dbReference type="PROSITE-ProRule" id="PRU01198"/>
    </source>
</evidence>
<sequence>MAVIYYDKDCDLSLIEKKLIGIVGYGAQGHAHAQNLRDSGLKVIVACVEGGRGWKKATADGFEVMCVAEMAKKADIIMMLAPDTSQAKIYKDSIEQGLKPGKMLMFAHGFNIHYGQIVPPSFVDVTMIAPKCPGYMLRQVFTEGAGAPSLIAVEQDASGKAKELALAYAKGIGSNRAGILETTFAEETETDLFGEQAVLCGGTTSLVKAGFETLVEAGYQPEVAYFECLHELKLIVDLMYQGGIAYMRDSISDTAKYGDFTRGPRVINEDTYETMGEILGEIQDGSFAKEWILENQAGRPVYNSLRRMESEHLIEEVGAELRSMMSWLKKKR</sequence>
<organism>
    <name type="scientific">Dehalococcoides mccartyi (strain CBDB1)</name>
    <dbReference type="NCBI Taxonomy" id="255470"/>
    <lineage>
        <taxon>Bacteria</taxon>
        <taxon>Bacillati</taxon>
        <taxon>Chloroflexota</taxon>
        <taxon>Dehalococcoidia</taxon>
        <taxon>Dehalococcoidales</taxon>
        <taxon>Dehalococcoidaceae</taxon>
        <taxon>Dehalococcoides</taxon>
    </lineage>
</organism>
<feature type="chain" id="PRO_0000226175" description="Ketol-acid reductoisomerase (NADP(+))">
    <location>
        <begin position="1"/>
        <end position="332"/>
    </location>
</feature>
<feature type="domain" description="KARI N-terminal Rossmann" evidence="2">
    <location>
        <begin position="1"/>
        <end position="182"/>
    </location>
</feature>
<feature type="domain" description="KARI C-terminal knotted" evidence="3">
    <location>
        <begin position="183"/>
        <end position="328"/>
    </location>
</feature>
<feature type="active site" evidence="1">
    <location>
        <position position="108"/>
    </location>
</feature>
<feature type="binding site" evidence="1">
    <location>
        <begin position="25"/>
        <end position="28"/>
    </location>
    <ligand>
        <name>NADP(+)</name>
        <dbReference type="ChEBI" id="CHEBI:58349"/>
    </ligand>
</feature>
<feature type="binding site" evidence="1">
    <location>
        <begin position="83"/>
        <end position="86"/>
    </location>
    <ligand>
        <name>NADP(+)</name>
        <dbReference type="ChEBI" id="CHEBI:58349"/>
    </ligand>
</feature>
<feature type="binding site" evidence="1">
    <location>
        <position position="134"/>
    </location>
    <ligand>
        <name>NADP(+)</name>
        <dbReference type="ChEBI" id="CHEBI:58349"/>
    </ligand>
</feature>
<feature type="binding site" evidence="1">
    <location>
        <position position="191"/>
    </location>
    <ligand>
        <name>Mg(2+)</name>
        <dbReference type="ChEBI" id="CHEBI:18420"/>
        <label>1</label>
    </ligand>
</feature>
<feature type="binding site" evidence="1">
    <location>
        <position position="191"/>
    </location>
    <ligand>
        <name>Mg(2+)</name>
        <dbReference type="ChEBI" id="CHEBI:18420"/>
        <label>2</label>
    </ligand>
</feature>
<feature type="binding site" evidence="1">
    <location>
        <position position="195"/>
    </location>
    <ligand>
        <name>Mg(2+)</name>
        <dbReference type="ChEBI" id="CHEBI:18420"/>
        <label>1</label>
    </ligand>
</feature>
<feature type="binding site" evidence="1">
    <location>
        <position position="227"/>
    </location>
    <ligand>
        <name>Mg(2+)</name>
        <dbReference type="ChEBI" id="CHEBI:18420"/>
        <label>2</label>
    </ligand>
</feature>
<feature type="binding site" evidence="1">
    <location>
        <position position="231"/>
    </location>
    <ligand>
        <name>Mg(2+)</name>
        <dbReference type="ChEBI" id="CHEBI:18420"/>
        <label>2</label>
    </ligand>
</feature>
<feature type="binding site" evidence="1">
    <location>
        <position position="252"/>
    </location>
    <ligand>
        <name>substrate</name>
    </ligand>
</feature>
<reference key="1">
    <citation type="journal article" date="2005" name="Nat. Biotechnol.">
        <title>Genome sequence of the chlorinated compound-respiring bacterium Dehalococcoides species strain CBDB1.</title>
        <authorList>
            <person name="Kube M."/>
            <person name="Beck A."/>
            <person name="Zinder S.H."/>
            <person name="Kuhl H."/>
            <person name="Reinhardt R."/>
            <person name="Adrian L."/>
        </authorList>
    </citation>
    <scope>NUCLEOTIDE SEQUENCE [LARGE SCALE GENOMIC DNA]</scope>
    <source>
        <strain>CBDB1</strain>
    </source>
</reference>